<feature type="chain" id="PRO_0000142400" description="Adenine deaminase">
    <location>
        <begin position="1"/>
        <end position="585"/>
    </location>
</feature>
<accession>Q9KF46</accession>
<proteinExistence type="inferred from homology"/>
<name>ADEC_HALH5</name>
<protein>
    <recommendedName>
        <fullName evidence="1">Adenine deaminase</fullName>
        <shortName evidence="1">Adenase</shortName>
        <shortName evidence="1">Adenine aminase</shortName>
        <ecNumber evidence="1">3.5.4.2</ecNumber>
    </recommendedName>
</protein>
<keyword id="KW-0378">Hydrolase</keyword>
<keyword id="KW-0464">Manganese</keyword>
<keyword id="KW-1185">Reference proteome</keyword>
<dbReference type="EC" id="3.5.4.2" evidence="1"/>
<dbReference type="EMBL" id="BA000004">
    <property type="protein sequence ID" value="BAB04359.1"/>
    <property type="molecule type" value="Genomic_DNA"/>
</dbReference>
<dbReference type="PIR" id="H83729">
    <property type="entry name" value="H83729"/>
</dbReference>
<dbReference type="RefSeq" id="WP_010896816.1">
    <property type="nucleotide sequence ID" value="NC_002570.2"/>
</dbReference>
<dbReference type="SMR" id="Q9KF46"/>
<dbReference type="STRING" id="272558.gene:10726514"/>
<dbReference type="KEGG" id="bha:BH0640"/>
<dbReference type="eggNOG" id="COG1001">
    <property type="taxonomic scope" value="Bacteria"/>
</dbReference>
<dbReference type="HOGENOM" id="CLU_027935_0_0_9"/>
<dbReference type="OrthoDB" id="9775607at2"/>
<dbReference type="Proteomes" id="UP000001258">
    <property type="component" value="Chromosome"/>
</dbReference>
<dbReference type="GO" id="GO:0000034">
    <property type="term" value="F:adenine deaminase activity"/>
    <property type="evidence" value="ECO:0007669"/>
    <property type="project" value="UniProtKB-UniRule"/>
</dbReference>
<dbReference type="GO" id="GO:0006146">
    <property type="term" value="P:adenine catabolic process"/>
    <property type="evidence" value="ECO:0007669"/>
    <property type="project" value="InterPro"/>
</dbReference>
<dbReference type="CDD" id="cd01295">
    <property type="entry name" value="AdeC"/>
    <property type="match status" value="1"/>
</dbReference>
<dbReference type="FunFam" id="3.20.20.140:FF:000016">
    <property type="entry name" value="Adenine deaminase"/>
    <property type="match status" value="1"/>
</dbReference>
<dbReference type="Gene3D" id="3.20.20.140">
    <property type="entry name" value="Metal-dependent hydrolases"/>
    <property type="match status" value="1"/>
</dbReference>
<dbReference type="Gene3D" id="2.30.40.10">
    <property type="entry name" value="Urease, subunit C, domain 1"/>
    <property type="match status" value="1"/>
</dbReference>
<dbReference type="HAMAP" id="MF_01518">
    <property type="entry name" value="Adenine_deamin"/>
    <property type="match status" value="1"/>
</dbReference>
<dbReference type="InterPro" id="IPR006679">
    <property type="entry name" value="Adenine_deam"/>
</dbReference>
<dbReference type="InterPro" id="IPR026912">
    <property type="entry name" value="Adenine_deam_C"/>
</dbReference>
<dbReference type="InterPro" id="IPR006680">
    <property type="entry name" value="Amidohydro-rel"/>
</dbReference>
<dbReference type="InterPro" id="IPR011059">
    <property type="entry name" value="Metal-dep_hydrolase_composite"/>
</dbReference>
<dbReference type="InterPro" id="IPR032466">
    <property type="entry name" value="Metal_Hydrolase"/>
</dbReference>
<dbReference type="NCBIfam" id="TIGR01178">
    <property type="entry name" value="ade"/>
    <property type="match status" value="1"/>
</dbReference>
<dbReference type="PANTHER" id="PTHR11113:SF2">
    <property type="entry name" value="ADENINE DEAMINASE"/>
    <property type="match status" value="1"/>
</dbReference>
<dbReference type="PANTHER" id="PTHR11113">
    <property type="entry name" value="N-ACETYLGLUCOSAMINE-6-PHOSPHATE DEACETYLASE"/>
    <property type="match status" value="1"/>
</dbReference>
<dbReference type="Pfam" id="PF13382">
    <property type="entry name" value="Adenine_deam_C"/>
    <property type="match status" value="1"/>
</dbReference>
<dbReference type="Pfam" id="PF01979">
    <property type="entry name" value="Amidohydro_1"/>
    <property type="match status" value="1"/>
</dbReference>
<dbReference type="SUPFAM" id="SSF51338">
    <property type="entry name" value="Composite domain of metallo-dependent hydrolases"/>
    <property type="match status" value="1"/>
</dbReference>
<dbReference type="SUPFAM" id="SSF51556">
    <property type="entry name" value="Metallo-dependent hydrolases"/>
    <property type="match status" value="1"/>
</dbReference>
<gene>
    <name evidence="1" type="primary">ade</name>
    <name type="synonym">adeC</name>
    <name type="ordered locus">BH0640</name>
</gene>
<comment type="catalytic activity">
    <reaction evidence="1">
        <text>adenine + H2O + H(+) = hypoxanthine + NH4(+)</text>
        <dbReference type="Rhea" id="RHEA:23688"/>
        <dbReference type="ChEBI" id="CHEBI:15377"/>
        <dbReference type="ChEBI" id="CHEBI:15378"/>
        <dbReference type="ChEBI" id="CHEBI:16708"/>
        <dbReference type="ChEBI" id="CHEBI:17368"/>
        <dbReference type="ChEBI" id="CHEBI:28938"/>
        <dbReference type="EC" id="3.5.4.2"/>
    </reaction>
</comment>
<comment type="cofactor">
    <cofactor evidence="1">
        <name>Mn(2+)</name>
        <dbReference type="ChEBI" id="CHEBI:29035"/>
    </cofactor>
</comment>
<comment type="similarity">
    <text evidence="1">Belongs to the metallo-dependent hydrolases superfamily. Adenine deaminase family.</text>
</comment>
<organism>
    <name type="scientific">Halalkalibacterium halodurans (strain ATCC BAA-125 / DSM 18197 / FERM 7344 / JCM 9153 / C-125)</name>
    <name type="common">Bacillus halodurans</name>
    <dbReference type="NCBI Taxonomy" id="272558"/>
    <lineage>
        <taxon>Bacteria</taxon>
        <taxon>Bacillati</taxon>
        <taxon>Bacillota</taxon>
        <taxon>Bacilli</taxon>
        <taxon>Bacillales</taxon>
        <taxon>Bacillaceae</taxon>
        <taxon>Halalkalibacterium (ex Joshi et al. 2022)</taxon>
    </lineage>
</organism>
<sequence>MTDRLERKLAIAANQDKADLLIKNGQIVDVFQLETFEGDVVIADGEIVAISDPGTYEAHEEVDAKGAFIAPAFIDGHVHIESSMVAPEQFAKVVVPHGVTTVIADPHEIANVAGVQGVEYMLDASEGIPLDVKMMVPSCVPATPFEHSGARLTAEEVAELFRDPRIFGLGEVMDYPAVLTRDQEMMAKLKAAHSEGRIVDGHGAGLDSVALNAYTAAGIGNDHEAVTPEEAKARLQRGMYLLIREGTAAKDFDALMKAITPMNSRRALFVTDDKHLDELVEEGSIDHHVRKAIQIGVNPLQAIQMASLNAAECFKLAKKGAIAPGFTADLLFIEDLQSLAITHVFKNGTCVAKNGKLIVPIRETVQPPQRLLESVNMKLVTKEQLELSLQSDEEAHLIQIQPGSIVTKHIREKVAVKDGVFIPSVARDQLKLVVAERHHKRGTVGVGIVKGFGLTKGAIATTVAHDSHNIVAVGTNDEDLLAAIKELENIQGGMTIVKDGKVLVSLPLTIGGLMSDQSYDVVCEQIKSVDAAIGALGFVGDFNPFLTLSFLALPVIPEIKLTDQGLFDVTSFSFIDQQVYAEETN</sequence>
<evidence type="ECO:0000255" key="1">
    <source>
        <dbReference type="HAMAP-Rule" id="MF_01518"/>
    </source>
</evidence>
<reference key="1">
    <citation type="journal article" date="2000" name="Nucleic Acids Res.">
        <title>Complete genome sequence of the alkaliphilic bacterium Bacillus halodurans and genomic sequence comparison with Bacillus subtilis.</title>
        <authorList>
            <person name="Takami H."/>
            <person name="Nakasone K."/>
            <person name="Takaki Y."/>
            <person name="Maeno G."/>
            <person name="Sasaki R."/>
            <person name="Masui N."/>
            <person name="Fuji F."/>
            <person name="Hirama C."/>
            <person name="Nakamura Y."/>
            <person name="Ogasawara N."/>
            <person name="Kuhara S."/>
            <person name="Horikoshi K."/>
        </authorList>
    </citation>
    <scope>NUCLEOTIDE SEQUENCE [LARGE SCALE GENOMIC DNA]</scope>
    <source>
        <strain>ATCC BAA-125 / DSM 18197 / FERM 7344 / JCM 9153 / C-125</strain>
    </source>
</reference>